<feature type="chain" id="PRO_1000095061" description="Elongation factor Tu">
    <location>
        <begin position="1"/>
        <end position="395"/>
    </location>
</feature>
<feature type="domain" description="tr-type G">
    <location>
        <begin position="10"/>
        <end position="204"/>
    </location>
</feature>
<feature type="region of interest" description="G1" evidence="1">
    <location>
        <begin position="19"/>
        <end position="26"/>
    </location>
</feature>
<feature type="region of interest" description="G2" evidence="1">
    <location>
        <begin position="60"/>
        <end position="64"/>
    </location>
</feature>
<feature type="region of interest" description="G3" evidence="1">
    <location>
        <begin position="81"/>
        <end position="84"/>
    </location>
</feature>
<feature type="region of interest" description="G4" evidence="1">
    <location>
        <begin position="136"/>
        <end position="139"/>
    </location>
</feature>
<feature type="region of interest" description="G5" evidence="1">
    <location>
        <begin position="174"/>
        <end position="176"/>
    </location>
</feature>
<feature type="binding site" evidence="2">
    <location>
        <begin position="19"/>
        <end position="26"/>
    </location>
    <ligand>
        <name>GTP</name>
        <dbReference type="ChEBI" id="CHEBI:37565"/>
    </ligand>
</feature>
<feature type="binding site" evidence="2">
    <location>
        <position position="26"/>
    </location>
    <ligand>
        <name>Mg(2+)</name>
        <dbReference type="ChEBI" id="CHEBI:18420"/>
    </ligand>
</feature>
<feature type="binding site" evidence="2">
    <location>
        <begin position="81"/>
        <end position="85"/>
    </location>
    <ligand>
        <name>GTP</name>
        <dbReference type="ChEBI" id="CHEBI:37565"/>
    </ligand>
</feature>
<feature type="binding site" evidence="2">
    <location>
        <begin position="136"/>
        <end position="139"/>
    </location>
    <ligand>
        <name>GTP</name>
        <dbReference type="ChEBI" id="CHEBI:37565"/>
    </ligand>
</feature>
<gene>
    <name evidence="2" type="primary">tuf</name>
    <name type="ordered locus">Exig_0094</name>
</gene>
<reference key="1">
    <citation type="submission" date="2008-04" db="EMBL/GenBank/DDBJ databases">
        <title>Complete sequence of chromosome of Exiguobacterium sibiricum 255-15.</title>
        <authorList>
            <consortium name="US DOE Joint Genome Institute"/>
            <person name="Copeland A."/>
            <person name="Lucas S."/>
            <person name="Lapidus A."/>
            <person name="Glavina del Rio T."/>
            <person name="Dalin E."/>
            <person name="Tice H."/>
            <person name="Bruce D."/>
            <person name="Goodwin L."/>
            <person name="Pitluck S."/>
            <person name="Kiss H."/>
            <person name="Chertkov O."/>
            <person name="Monk C."/>
            <person name="Brettin T."/>
            <person name="Detter J.C."/>
            <person name="Han C."/>
            <person name="Kuske C.R."/>
            <person name="Schmutz J."/>
            <person name="Larimer F."/>
            <person name="Land M."/>
            <person name="Hauser L."/>
            <person name="Kyrpides N."/>
            <person name="Mikhailova N."/>
            <person name="Vishnivetskaya T."/>
            <person name="Rodrigues D.F."/>
            <person name="Gilichinsky D."/>
            <person name="Tiedje J."/>
            <person name="Richardson P."/>
        </authorList>
    </citation>
    <scope>NUCLEOTIDE SEQUENCE [LARGE SCALE GENOMIC DNA]</scope>
    <source>
        <strain>DSM 17290 / CCUG 55495 / CIP 109462 / JCM 13490 / 255-15</strain>
    </source>
</reference>
<sequence length="395" mass="43625">MGKEKFDRSKPHVNVGTIGHVDHGKTTLTAAISAVLAKSQGKAATKFDQIDGAPEERERGITIATAHIEYETDKRHYAHVDCPGHADYVKNMITGAAQMDGAILVVSATDGPMPQTREHILLSRQVGVPFIVVFMNKVDMVDDEELLELVEMEIRELLSEYDFPGDDLPVIQGSALGALNGEAKWEEKIMELMNAVDEYIPEPTRDTEKDFMMPVEDVFSITGRGTVATGRVERGVLKVNDEVEIVGLHEETKKSVCTGVEMFRKLLDYAEAGDNIGALLRGVSRDDIERGQVLAKPNTITPHKTFKAQVYILSKEEGGRHTPFFGNYRPQFYFRTTDVTGMCQLPEGTEMVMPGDNIELTVELIAPIALEKETRFSIREGGRTVGAGSVTEIVE</sequence>
<comment type="function">
    <text evidence="2">GTP hydrolase that promotes the GTP-dependent binding of aminoacyl-tRNA to the A-site of ribosomes during protein biosynthesis.</text>
</comment>
<comment type="catalytic activity">
    <reaction evidence="2">
        <text>GTP + H2O = GDP + phosphate + H(+)</text>
        <dbReference type="Rhea" id="RHEA:19669"/>
        <dbReference type="ChEBI" id="CHEBI:15377"/>
        <dbReference type="ChEBI" id="CHEBI:15378"/>
        <dbReference type="ChEBI" id="CHEBI:37565"/>
        <dbReference type="ChEBI" id="CHEBI:43474"/>
        <dbReference type="ChEBI" id="CHEBI:58189"/>
        <dbReference type="EC" id="3.6.5.3"/>
    </reaction>
    <physiologicalReaction direction="left-to-right" evidence="2">
        <dbReference type="Rhea" id="RHEA:19670"/>
    </physiologicalReaction>
</comment>
<comment type="subunit">
    <text evidence="2">Monomer.</text>
</comment>
<comment type="subcellular location">
    <subcellularLocation>
        <location evidence="2">Cytoplasm</location>
    </subcellularLocation>
</comment>
<comment type="similarity">
    <text evidence="2">Belongs to the TRAFAC class translation factor GTPase superfamily. Classic translation factor GTPase family. EF-Tu/EF-1A subfamily.</text>
</comment>
<organism>
    <name type="scientific">Exiguobacterium sibiricum (strain DSM 17290 / CCUG 55495 / CIP 109462 / JCM 13490 / 255-15)</name>
    <dbReference type="NCBI Taxonomy" id="262543"/>
    <lineage>
        <taxon>Bacteria</taxon>
        <taxon>Bacillati</taxon>
        <taxon>Bacillota</taxon>
        <taxon>Bacilli</taxon>
        <taxon>Bacillales</taxon>
        <taxon>Bacillales Family XII. Incertae Sedis</taxon>
        <taxon>Exiguobacterium</taxon>
    </lineage>
</organism>
<name>EFTU_EXIS2</name>
<evidence type="ECO:0000250" key="1"/>
<evidence type="ECO:0000255" key="2">
    <source>
        <dbReference type="HAMAP-Rule" id="MF_00118"/>
    </source>
</evidence>
<accession>B1YGU8</accession>
<keyword id="KW-0963">Cytoplasm</keyword>
<keyword id="KW-0251">Elongation factor</keyword>
<keyword id="KW-0342">GTP-binding</keyword>
<keyword id="KW-0378">Hydrolase</keyword>
<keyword id="KW-0460">Magnesium</keyword>
<keyword id="KW-0479">Metal-binding</keyword>
<keyword id="KW-0547">Nucleotide-binding</keyword>
<keyword id="KW-0648">Protein biosynthesis</keyword>
<keyword id="KW-1185">Reference proteome</keyword>
<protein>
    <recommendedName>
        <fullName evidence="2">Elongation factor Tu</fullName>
        <shortName evidence="2">EF-Tu</shortName>
        <ecNumber evidence="2">3.6.5.3</ecNumber>
    </recommendedName>
</protein>
<dbReference type="EC" id="3.6.5.3" evidence="2"/>
<dbReference type="EMBL" id="CP001022">
    <property type="protein sequence ID" value="ACB59581.1"/>
    <property type="molecule type" value="Genomic_DNA"/>
</dbReference>
<dbReference type="RefSeq" id="WP_012369007.1">
    <property type="nucleotide sequence ID" value="NC_010556.1"/>
</dbReference>
<dbReference type="SMR" id="B1YGU8"/>
<dbReference type="STRING" id="262543.Exig_0094"/>
<dbReference type="KEGG" id="esi:Exig_0094"/>
<dbReference type="eggNOG" id="COG0050">
    <property type="taxonomic scope" value="Bacteria"/>
</dbReference>
<dbReference type="HOGENOM" id="CLU_007265_0_1_9"/>
<dbReference type="OrthoDB" id="9804504at2"/>
<dbReference type="Proteomes" id="UP000001681">
    <property type="component" value="Chromosome"/>
</dbReference>
<dbReference type="GO" id="GO:0005829">
    <property type="term" value="C:cytosol"/>
    <property type="evidence" value="ECO:0007669"/>
    <property type="project" value="TreeGrafter"/>
</dbReference>
<dbReference type="GO" id="GO:0005525">
    <property type="term" value="F:GTP binding"/>
    <property type="evidence" value="ECO:0007669"/>
    <property type="project" value="UniProtKB-UniRule"/>
</dbReference>
<dbReference type="GO" id="GO:0003924">
    <property type="term" value="F:GTPase activity"/>
    <property type="evidence" value="ECO:0007669"/>
    <property type="project" value="InterPro"/>
</dbReference>
<dbReference type="GO" id="GO:0003746">
    <property type="term" value="F:translation elongation factor activity"/>
    <property type="evidence" value="ECO:0007669"/>
    <property type="project" value="UniProtKB-UniRule"/>
</dbReference>
<dbReference type="CDD" id="cd01884">
    <property type="entry name" value="EF_Tu"/>
    <property type="match status" value="1"/>
</dbReference>
<dbReference type="CDD" id="cd03697">
    <property type="entry name" value="EFTU_II"/>
    <property type="match status" value="1"/>
</dbReference>
<dbReference type="CDD" id="cd03707">
    <property type="entry name" value="EFTU_III"/>
    <property type="match status" value="1"/>
</dbReference>
<dbReference type="FunFam" id="2.40.30.10:FF:000001">
    <property type="entry name" value="Elongation factor Tu"/>
    <property type="match status" value="1"/>
</dbReference>
<dbReference type="FunFam" id="3.40.50.300:FF:000003">
    <property type="entry name" value="Elongation factor Tu"/>
    <property type="match status" value="1"/>
</dbReference>
<dbReference type="Gene3D" id="3.40.50.300">
    <property type="entry name" value="P-loop containing nucleotide triphosphate hydrolases"/>
    <property type="match status" value="1"/>
</dbReference>
<dbReference type="Gene3D" id="2.40.30.10">
    <property type="entry name" value="Translation factors"/>
    <property type="match status" value="2"/>
</dbReference>
<dbReference type="HAMAP" id="MF_00118_B">
    <property type="entry name" value="EF_Tu_B"/>
    <property type="match status" value="1"/>
</dbReference>
<dbReference type="InterPro" id="IPR041709">
    <property type="entry name" value="EF-Tu_GTP-bd"/>
</dbReference>
<dbReference type="InterPro" id="IPR050055">
    <property type="entry name" value="EF-Tu_GTPase"/>
</dbReference>
<dbReference type="InterPro" id="IPR004161">
    <property type="entry name" value="EFTu-like_2"/>
</dbReference>
<dbReference type="InterPro" id="IPR033720">
    <property type="entry name" value="EFTU_2"/>
</dbReference>
<dbReference type="InterPro" id="IPR031157">
    <property type="entry name" value="G_TR_CS"/>
</dbReference>
<dbReference type="InterPro" id="IPR027417">
    <property type="entry name" value="P-loop_NTPase"/>
</dbReference>
<dbReference type="InterPro" id="IPR005225">
    <property type="entry name" value="Small_GTP-bd"/>
</dbReference>
<dbReference type="InterPro" id="IPR000795">
    <property type="entry name" value="T_Tr_GTP-bd_dom"/>
</dbReference>
<dbReference type="InterPro" id="IPR009000">
    <property type="entry name" value="Transl_B-barrel_sf"/>
</dbReference>
<dbReference type="InterPro" id="IPR009001">
    <property type="entry name" value="Transl_elong_EF1A/Init_IF2_C"/>
</dbReference>
<dbReference type="InterPro" id="IPR004541">
    <property type="entry name" value="Transl_elong_EFTu/EF1A_bac/org"/>
</dbReference>
<dbReference type="InterPro" id="IPR004160">
    <property type="entry name" value="Transl_elong_EFTu/EF1A_C"/>
</dbReference>
<dbReference type="NCBIfam" id="TIGR00485">
    <property type="entry name" value="EF-Tu"/>
    <property type="match status" value="1"/>
</dbReference>
<dbReference type="NCBIfam" id="NF000766">
    <property type="entry name" value="PRK00049.1"/>
    <property type="match status" value="1"/>
</dbReference>
<dbReference type="NCBIfam" id="NF009372">
    <property type="entry name" value="PRK12735.1"/>
    <property type="match status" value="1"/>
</dbReference>
<dbReference type="NCBIfam" id="NF009373">
    <property type="entry name" value="PRK12736.1"/>
    <property type="match status" value="1"/>
</dbReference>
<dbReference type="NCBIfam" id="TIGR00231">
    <property type="entry name" value="small_GTP"/>
    <property type="match status" value="1"/>
</dbReference>
<dbReference type="PANTHER" id="PTHR43721:SF22">
    <property type="entry name" value="ELONGATION FACTOR TU, MITOCHONDRIAL"/>
    <property type="match status" value="1"/>
</dbReference>
<dbReference type="PANTHER" id="PTHR43721">
    <property type="entry name" value="ELONGATION FACTOR TU-RELATED"/>
    <property type="match status" value="1"/>
</dbReference>
<dbReference type="Pfam" id="PF00009">
    <property type="entry name" value="GTP_EFTU"/>
    <property type="match status" value="1"/>
</dbReference>
<dbReference type="Pfam" id="PF03144">
    <property type="entry name" value="GTP_EFTU_D2"/>
    <property type="match status" value="1"/>
</dbReference>
<dbReference type="Pfam" id="PF03143">
    <property type="entry name" value="GTP_EFTU_D3"/>
    <property type="match status" value="1"/>
</dbReference>
<dbReference type="PRINTS" id="PR00315">
    <property type="entry name" value="ELONGATNFCT"/>
</dbReference>
<dbReference type="SUPFAM" id="SSF50465">
    <property type="entry name" value="EF-Tu/eEF-1alpha/eIF2-gamma C-terminal domain"/>
    <property type="match status" value="1"/>
</dbReference>
<dbReference type="SUPFAM" id="SSF52540">
    <property type="entry name" value="P-loop containing nucleoside triphosphate hydrolases"/>
    <property type="match status" value="1"/>
</dbReference>
<dbReference type="SUPFAM" id="SSF50447">
    <property type="entry name" value="Translation proteins"/>
    <property type="match status" value="1"/>
</dbReference>
<dbReference type="PROSITE" id="PS00301">
    <property type="entry name" value="G_TR_1"/>
    <property type="match status" value="1"/>
</dbReference>
<dbReference type="PROSITE" id="PS51722">
    <property type="entry name" value="G_TR_2"/>
    <property type="match status" value="1"/>
</dbReference>
<proteinExistence type="inferred from homology"/>